<name>22K_ADES1</name>
<accession>A9CB93</accession>
<feature type="chain" id="PRO_0000425931" description="Putative protein 22K">
    <location>
        <begin position="1"/>
        <end position="104"/>
    </location>
</feature>
<feature type="region of interest" description="Disordered" evidence="1">
    <location>
        <begin position="35"/>
        <end position="104"/>
    </location>
</feature>
<feature type="compositionally biased region" description="Acidic residues" evidence="1">
    <location>
        <begin position="60"/>
        <end position="78"/>
    </location>
</feature>
<feature type="compositionally biased region" description="Low complexity" evidence="1">
    <location>
        <begin position="94"/>
        <end position="104"/>
    </location>
</feature>
<organism>
    <name type="scientific">Snake adenovirus serotype 1</name>
    <name type="common">SnAdV-1</name>
    <dbReference type="NCBI Taxonomy" id="189830"/>
    <lineage>
        <taxon>Viruses</taxon>
        <taxon>Varidnaviria</taxon>
        <taxon>Bamfordvirae</taxon>
        <taxon>Preplasmiviricota</taxon>
        <taxon>Tectiliviricetes</taxon>
        <taxon>Rowavirales</taxon>
        <taxon>Adenoviridae</taxon>
        <taxon>Atadenovirus</taxon>
        <taxon>Snake atadenovirus A</taxon>
    </lineage>
</organism>
<protein>
    <recommendedName>
        <fullName>Putative protein 22K</fullName>
    </recommendedName>
</protein>
<proteinExistence type="predicted"/>
<sequence length="104" mass="11369">MASEKSYKTVPVTGKNLAMIYHHMGNKTQSLEEAYKQLEKELGETQAPPPSPQSSLDGEPLSEGELEEISEEEEEEGEAPPPIPAKKRQRKNPSKAPAAKAPSK</sequence>
<dbReference type="EMBL" id="DQ106414">
    <property type="protein sequence ID" value="ABA47243.1"/>
    <property type="molecule type" value="Genomic_DNA"/>
</dbReference>
<dbReference type="RefSeq" id="YP_001552260.1">
    <property type="nucleotide sequence ID" value="NC_009989.1"/>
</dbReference>
<dbReference type="SMR" id="A9CB93"/>
<dbReference type="GeneID" id="10973874"/>
<dbReference type="KEGG" id="vg:10973874"/>
<dbReference type="OrthoDB" id="22576at10239"/>
<dbReference type="Proteomes" id="UP000136605">
    <property type="component" value="Genome"/>
</dbReference>
<evidence type="ECO:0000256" key="1">
    <source>
        <dbReference type="SAM" id="MobiDB-lite"/>
    </source>
</evidence>
<organismHost>
    <name type="scientific">Pantherophis guttatus</name>
    <name type="common">Corn snake</name>
    <name type="synonym">Elaphe guttata</name>
    <dbReference type="NCBI Taxonomy" id="94885"/>
</organismHost>
<reference key="1">
    <citation type="journal article" date="2002" name="J. Gen. Virol.">
        <title>Genetic analysis of an adenovirus isolated from corn snake (Elaphe guttata) implies common origin with the members of the proposed new genus Atadenovirus.</title>
        <authorList>
            <person name="Farkas S.L."/>
            <person name="Benko M."/>
            <person name="Elo P.T."/>
            <person name="Ursu K."/>
            <person name="Dan A."/>
            <person name="Ahne W."/>
            <person name="Harrach B."/>
        </authorList>
    </citation>
    <scope>NUCLEOTIDE SEQUENCE [GENOMIC DNA]</scope>
</reference>
<keyword id="KW-1185">Reference proteome</keyword>